<organism>
    <name type="scientific">Saccharomyces cerevisiae (strain JAY291)</name>
    <name type="common">Baker's yeast</name>
    <dbReference type="NCBI Taxonomy" id="574961"/>
    <lineage>
        <taxon>Eukaryota</taxon>
        <taxon>Fungi</taxon>
        <taxon>Dikarya</taxon>
        <taxon>Ascomycota</taxon>
        <taxon>Saccharomycotina</taxon>
        <taxon>Saccharomycetes</taxon>
        <taxon>Saccharomycetales</taxon>
        <taxon>Saccharomycetaceae</taxon>
        <taxon>Saccharomyces</taxon>
    </lineage>
</organism>
<dbReference type="EC" id="2.6.1.16"/>
<dbReference type="EMBL" id="ACFL01000033">
    <property type="protein sequence ID" value="EEU08477.1"/>
    <property type="status" value="ALT_INIT"/>
    <property type="molecule type" value="Genomic_DNA"/>
</dbReference>
<dbReference type="SMR" id="C7GL41"/>
<dbReference type="OrthoDB" id="13837at4893"/>
<dbReference type="UniPathway" id="UPA00113">
    <property type="reaction ID" value="UER00528"/>
</dbReference>
<dbReference type="Proteomes" id="UP000008073">
    <property type="component" value="Unassembled WGS sequence"/>
</dbReference>
<dbReference type="GO" id="GO:0097367">
    <property type="term" value="F:carbohydrate derivative binding"/>
    <property type="evidence" value="ECO:0007669"/>
    <property type="project" value="InterPro"/>
</dbReference>
<dbReference type="GO" id="GO:0004360">
    <property type="term" value="F:glutamine-fructose-6-phosphate transaminase (isomerizing) activity"/>
    <property type="evidence" value="ECO:0007669"/>
    <property type="project" value="UniProtKB-EC"/>
</dbReference>
<dbReference type="GO" id="GO:0006002">
    <property type="term" value="P:fructose 6-phosphate metabolic process"/>
    <property type="evidence" value="ECO:0007669"/>
    <property type="project" value="TreeGrafter"/>
</dbReference>
<dbReference type="GO" id="GO:0006487">
    <property type="term" value="P:protein N-linked glycosylation"/>
    <property type="evidence" value="ECO:0007669"/>
    <property type="project" value="TreeGrafter"/>
</dbReference>
<dbReference type="GO" id="GO:0006048">
    <property type="term" value="P:UDP-N-acetylglucosamine biosynthetic process"/>
    <property type="evidence" value="ECO:0007669"/>
    <property type="project" value="UniProtKB-UniPathway"/>
</dbReference>
<dbReference type="CDD" id="cd00714">
    <property type="entry name" value="GFAT"/>
    <property type="match status" value="1"/>
</dbReference>
<dbReference type="CDD" id="cd05008">
    <property type="entry name" value="SIS_GlmS_GlmD_1"/>
    <property type="match status" value="1"/>
</dbReference>
<dbReference type="CDD" id="cd05009">
    <property type="entry name" value="SIS_GlmS_GlmD_2"/>
    <property type="match status" value="1"/>
</dbReference>
<dbReference type="FunFam" id="3.40.50.10490:FF:000001">
    <property type="entry name" value="Glutamine--fructose-6-phosphate aminotransferase [isomerizing]"/>
    <property type="match status" value="1"/>
</dbReference>
<dbReference type="FunFam" id="3.40.50.10490:FF:000002">
    <property type="entry name" value="Glutamine--fructose-6-phosphate aminotransferase [isomerizing]"/>
    <property type="match status" value="1"/>
</dbReference>
<dbReference type="Gene3D" id="3.40.50.10490">
    <property type="entry name" value="Glucose-6-phosphate isomerase like protein, domain 1"/>
    <property type="match status" value="2"/>
</dbReference>
<dbReference type="Gene3D" id="3.60.20.10">
    <property type="entry name" value="Glutamine Phosphoribosylpyrophosphate, subunit 1, domain 1"/>
    <property type="match status" value="1"/>
</dbReference>
<dbReference type="InterPro" id="IPR017932">
    <property type="entry name" value="GATase_2_dom"/>
</dbReference>
<dbReference type="InterPro" id="IPR047084">
    <property type="entry name" value="GFAT_N"/>
</dbReference>
<dbReference type="InterPro" id="IPR035466">
    <property type="entry name" value="GlmS/AgaS_SIS"/>
</dbReference>
<dbReference type="InterPro" id="IPR035490">
    <property type="entry name" value="GlmS/FrlB_SIS"/>
</dbReference>
<dbReference type="InterPro" id="IPR029055">
    <property type="entry name" value="Ntn_hydrolases_N"/>
</dbReference>
<dbReference type="InterPro" id="IPR001347">
    <property type="entry name" value="SIS_dom"/>
</dbReference>
<dbReference type="InterPro" id="IPR046348">
    <property type="entry name" value="SIS_dom_sf"/>
</dbReference>
<dbReference type="PANTHER" id="PTHR10937">
    <property type="entry name" value="GLUCOSAMINE--FRUCTOSE-6-PHOSPHATE AMINOTRANSFERASE, ISOMERIZING"/>
    <property type="match status" value="1"/>
</dbReference>
<dbReference type="PANTHER" id="PTHR10937:SF0">
    <property type="entry name" value="GLUTAMINE--FRUCTOSE-6-PHOSPHATE TRANSAMINASE (ISOMERIZING)"/>
    <property type="match status" value="1"/>
</dbReference>
<dbReference type="Pfam" id="PF13522">
    <property type="entry name" value="GATase_6"/>
    <property type="match status" value="1"/>
</dbReference>
<dbReference type="Pfam" id="PF01380">
    <property type="entry name" value="SIS"/>
    <property type="match status" value="2"/>
</dbReference>
<dbReference type="SUPFAM" id="SSF56235">
    <property type="entry name" value="N-terminal nucleophile aminohydrolases (Ntn hydrolases)"/>
    <property type="match status" value="1"/>
</dbReference>
<dbReference type="SUPFAM" id="SSF53697">
    <property type="entry name" value="SIS domain"/>
    <property type="match status" value="1"/>
</dbReference>
<dbReference type="PROSITE" id="PS51278">
    <property type="entry name" value="GATASE_TYPE_2"/>
    <property type="match status" value="1"/>
</dbReference>
<dbReference type="PROSITE" id="PS51464">
    <property type="entry name" value="SIS"/>
    <property type="match status" value="2"/>
</dbReference>
<name>YM084_YEAS2</name>
<comment type="function">
    <text evidence="1">Involved in amino sugar synthesis (formation of chitin, supplies the amino sugars of asparagine-linked oligosaccharides of glycoproteins).</text>
</comment>
<comment type="catalytic activity">
    <reaction>
        <text>D-fructose 6-phosphate + L-glutamine = D-glucosamine 6-phosphate + L-glutamate</text>
        <dbReference type="Rhea" id="RHEA:13237"/>
        <dbReference type="ChEBI" id="CHEBI:29985"/>
        <dbReference type="ChEBI" id="CHEBI:58359"/>
        <dbReference type="ChEBI" id="CHEBI:58725"/>
        <dbReference type="ChEBI" id="CHEBI:61527"/>
        <dbReference type="EC" id="2.6.1.16"/>
    </reaction>
</comment>
<comment type="pathway">
    <text>Nucleotide-sugar biosynthesis; UDP-N-acetyl-alpha-D-glucosamine biosynthesis; alpha-D-glucosamine 6-phosphate from D-fructose 6-phosphate: step 1/1.</text>
</comment>
<comment type="sequence caution" evidence="5">
    <conflict type="erroneous initiation">
        <sequence resource="EMBL-CDS" id="EEU08477"/>
    </conflict>
</comment>
<proteinExistence type="inferred from homology"/>
<feature type="chain" id="PRO_0000393411" description="Putative glutamine--fructose-6-phosphate aminotransferase [isomerizing]">
    <location>
        <begin position="1"/>
        <end position="720"/>
    </location>
</feature>
<feature type="domain" description="Glutamine amidotransferase type-2" evidence="2">
    <location>
        <begin position="2"/>
        <end position="321"/>
    </location>
</feature>
<feature type="domain" description="SIS 1" evidence="3">
    <location>
        <begin position="393"/>
        <end position="532"/>
    </location>
</feature>
<feature type="domain" description="SIS 2" evidence="3">
    <location>
        <begin position="565"/>
        <end position="710"/>
    </location>
</feature>
<feature type="region of interest" description="Disordered" evidence="4">
    <location>
        <begin position="266"/>
        <end position="285"/>
    </location>
</feature>
<feature type="compositionally biased region" description="Polar residues" evidence="4">
    <location>
        <begin position="266"/>
        <end position="280"/>
    </location>
</feature>
<feature type="active site" description="Nucleophile; for GATase activity" evidence="2">
    <location>
        <position position="2"/>
    </location>
</feature>
<reference key="1">
    <citation type="journal article" date="2009" name="Genome Res.">
        <title>Genome structure of a Saccharomyces cerevisiae strain widely used in bioethanol production.</title>
        <authorList>
            <person name="Argueso J.L."/>
            <person name="Carazzolle M.F."/>
            <person name="Mieczkowski P.A."/>
            <person name="Duarte F.M."/>
            <person name="Netto O.V.C."/>
            <person name="Missawa S.K."/>
            <person name="Galzerani F."/>
            <person name="Costa G.G.L."/>
            <person name="Vidal R.O."/>
            <person name="Noronha M.F."/>
            <person name="Dominska M."/>
            <person name="Andrietta M.G.S."/>
            <person name="Andrietta S.R."/>
            <person name="Cunha A.F."/>
            <person name="Gomes L.H."/>
            <person name="Tavares F.C.A."/>
            <person name="Alcarde A.R."/>
            <person name="Dietrich F.S."/>
            <person name="McCusker J.H."/>
            <person name="Petes T.D."/>
            <person name="Pereira G.A.G."/>
        </authorList>
    </citation>
    <scope>NUCLEOTIDE SEQUENCE [LARGE SCALE GENOMIC DNA]</scope>
    <source>
        <strain>JAY291</strain>
    </source>
</reference>
<keyword id="KW-0032">Aminotransferase</keyword>
<keyword id="KW-0315">Glutamine amidotransferase</keyword>
<keyword id="KW-0677">Repeat</keyword>
<keyword id="KW-0808">Transferase</keyword>
<gene>
    <name type="ORF">C1Q_01026</name>
</gene>
<accession>C7GL41</accession>
<evidence type="ECO:0000250" key="1"/>
<evidence type="ECO:0000255" key="2">
    <source>
        <dbReference type="PROSITE-ProRule" id="PRU00609"/>
    </source>
</evidence>
<evidence type="ECO:0000255" key="3">
    <source>
        <dbReference type="PROSITE-ProRule" id="PRU00797"/>
    </source>
</evidence>
<evidence type="ECO:0000256" key="4">
    <source>
        <dbReference type="SAM" id="MobiDB-lite"/>
    </source>
</evidence>
<evidence type="ECO:0000305" key="5"/>
<sequence length="720" mass="80561">MCGIFGYCNFLIEKTRGEIIDTLIEGLQALEYKEYDSSGISIQGDELKSLNIYKQTGKISSLKEEIDLYNLNKNLPFISHCGIAHTRRATHGGLRRANCHPHNSDPSNEFVVVHNGVITNFANLKALLVAKGYVFKSDTDTECIPKLYKHIYDTSIELGYNLDFHVLTNLVLKELEGSYGLLCTSSHFPDEVVAARKGSPLVIGVKGKTDMDVNFVEVEYLDQEEDYLKLNTQTKSSGNVLAAAPVKYNTCLRKSPPLRSQYLRNSTTSTFNHGSSTETPAENGLPRPMEFYLSSDCASLARYVSKVVYLEDNDTAHIYDGELHIHCSKIGSEDFSFRTVQKLELELSKIKKGPYDNFMQKEIYEQCETTKNVMRGRVDAFTNRVVLGGLENWLTELRRAKRIIMIASKSSFHSCLAARPIFEELMEVPVNVELALDFVDRNCCIFRNDVCIFVSRSGETTDTINALNYCIKKEAVTIGVVNCSGSSISRFTHCGVHTNTGPEKGIATTKSYTSQYIALVMIALWMSEDLVSKIERRKEIIQALTIVPSQIKEVLELEPLIIELCDKKLKQHDTFLLLGRGYQFASALEGASKMKEISYVHSESILTDELGHRVLAVTSDNPPIIAFATKDAFSPKIASCIDQIIERKGNPIIICNKGHKIWEQDKQKGNVVTLEVPQTVDCLQGILNVIPLQLISYWLAIKKDIGVDLPRDSAMSAPDI</sequence>
<protein>
    <recommendedName>
        <fullName>Putative glutamine--fructose-6-phosphate aminotransferase [isomerizing]</fullName>
        <shortName>GFAT</shortName>
        <ecNumber>2.6.1.16</ecNumber>
    </recommendedName>
    <alternativeName>
        <fullName>D-fructose-6-phosphate amidotransferase</fullName>
    </alternativeName>
    <alternativeName>
        <fullName>Hexosephosphate aminotransferase</fullName>
    </alternativeName>
</protein>